<accession>E3VWJ0</accession>
<comment type="function">
    <text evidence="1">Catalyzes the cyclization of farnesyl diphosphate (FPP) to the tricyclic sesquiterpene pentalenene, which is the hydrocarbon precursor of the pentalenolactone family of antibiotics produced by a variety of Streptomyces species.</text>
</comment>
<comment type="catalytic activity">
    <reaction>
        <text>(2E,6E)-farnesyl diphosphate = pentalenene + diphosphate</text>
        <dbReference type="Rhea" id="RHEA:18081"/>
        <dbReference type="ChEBI" id="CHEBI:17251"/>
        <dbReference type="ChEBI" id="CHEBI:33019"/>
        <dbReference type="ChEBI" id="CHEBI:175763"/>
        <dbReference type="EC" id="4.2.3.7"/>
    </reaction>
</comment>
<comment type="cofactor">
    <cofactor evidence="1">
        <name>Mg(2+)</name>
        <dbReference type="ChEBI" id="CHEBI:18420"/>
    </cofactor>
    <text evidence="1">Binds 3 Mg(2+) ions per subunit.</text>
</comment>
<comment type="pathway">
    <text>Sesquiterpene biosynthesis; pentalenene biosynthesis; pentalenene from farnesyl diphosphate: step 1/1.</text>
</comment>
<comment type="pathway">
    <text>Antibiotic biosynthesis; pentalenolactone biosynthesis.</text>
</comment>
<comment type="subunit">
    <text evidence="1">Monomer.</text>
</comment>
<comment type="domain">
    <text evidence="1">The Asp-Asp-Xaa-Xaa-Asp/Glu (DDXXD/E) motif is important for the catalytic activity, presumably through binding to Mg(2+).</text>
</comment>
<comment type="similarity">
    <text evidence="2">Belongs to the terpene synthase family.</text>
</comment>
<name>PNTA_STRAE</name>
<organism>
    <name type="scientific">Streptomyces arenae</name>
    <dbReference type="NCBI Taxonomy" id="29301"/>
    <lineage>
        <taxon>Bacteria</taxon>
        <taxon>Bacillati</taxon>
        <taxon>Actinomycetota</taxon>
        <taxon>Actinomycetes</taxon>
        <taxon>Kitasatosporales</taxon>
        <taxon>Streptomycetaceae</taxon>
        <taxon>Streptomyces</taxon>
    </lineage>
</organism>
<keyword id="KW-0045">Antibiotic biosynthesis</keyword>
<keyword id="KW-0456">Lyase</keyword>
<keyword id="KW-0460">Magnesium</keyword>
<keyword id="KW-0479">Metal-binding</keyword>
<reference key="1">
    <citation type="journal article" date="2011" name="J. Am. Chem. Soc.">
        <title>Genome mining in streptomyces. Discovery of an unprecedented P450-catalyzed oxidative rearrangement that is the final step in the biosynthesis of pentalenolactone.</title>
        <authorList>
            <person name="Zhu D."/>
            <person name="Seo M.J."/>
            <person name="Ikeda H."/>
            <person name="Cane D.E."/>
        </authorList>
    </citation>
    <scope>NUCLEOTIDE SEQUENCE [GENOMIC DNA]</scope>
    <source>
        <strain>Tu469</strain>
    </source>
</reference>
<sequence>MPQDVDFHIPLPGRQSPDFARADAEQLAWPRSLGLINSEAAAERHLRGGYADLASRFYPHATGADLDLGVDLMSWFFLFDDLFDGPRGENPQETKQLTDAVAAALDGPLPDTAPPIAHGFADIWRRTSEGMTPAWCARSARHWRSYFDGYVDEAESRFWDTPYDSAAQYLAVRRQTIGVQPTVDLAERAGRFEVPHRVFDSAVLSAMLQIAVDVNLLLNDIASLEKEEARGEQNNMVMILRREHGWSKDRSVAHIQSEVRVRLEQYLVLESCLPQVGDIYRLDDAEREALERYRDDAVRTVIRGSYDWHRSSGRYDAEFALAAGAQGYLEELGRITH</sequence>
<dbReference type="EC" id="4.2.3.7"/>
<dbReference type="EMBL" id="HQ292065">
    <property type="protein sequence ID" value="ADO85578.1"/>
    <property type="molecule type" value="Genomic_DNA"/>
</dbReference>
<dbReference type="SMR" id="E3VWJ0"/>
<dbReference type="UniPathway" id="UPA00171">
    <property type="reaction ID" value="UER00581"/>
</dbReference>
<dbReference type="UniPathway" id="UPA00974"/>
<dbReference type="GO" id="GO:0046872">
    <property type="term" value="F:metal ion binding"/>
    <property type="evidence" value="ECO:0007669"/>
    <property type="project" value="UniProtKB-KW"/>
</dbReference>
<dbReference type="GO" id="GO:0050467">
    <property type="term" value="F:pentalenene synthase activity"/>
    <property type="evidence" value="ECO:0007669"/>
    <property type="project" value="UniProtKB-EC"/>
</dbReference>
<dbReference type="GO" id="GO:0017000">
    <property type="term" value="P:antibiotic biosynthetic process"/>
    <property type="evidence" value="ECO:0007669"/>
    <property type="project" value="UniProtKB-KW"/>
</dbReference>
<dbReference type="CDD" id="cd00687">
    <property type="entry name" value="Terpene_cyclase_nonplant_C1"/>
    <property type="match status" value="1"/>
</dbReference>
<dbReference type="Gene3D" id="1.10.600.10">
    <property type="entry name" value="Farnesyl Diphosphate Synthase"/>
    <property type="match status" value="1"/>
</dbReference>
<dbReference type="InterPro" id="IPR008949">
    <property type="entry name" value="Isoprenoid_synthase_dom_sf"/>
</dbReference>
<dbReference type="InterPro" id="IPR054969">
    <property type="entry name" value="PentlnSyn"/>
</dbReference>
<dbReference type="InterPro" id="IPR034686">
    <property type="entry name" value="Terpene_cyclase-like_2"/>
</dbReference>
<dbReference type="NCBIfam" id="NF045811">
    <property type="entry name" value="PentlnSynPtlA"/>
    <property type="match status" value="1"/>
</dbReference>
<dbReference type="PANTHER" id="PTHR35201:SF4">
    <property type="entry name" value="BETA-PINACENE SYNTHASE-RELATED"/>
    <property type="match status" value="1"/>
</dbReference>
<dbReference type="PANTHER" id="PTHR35201">
    <property type="entry name" value="TERPENE SYNTHASE"/>
    <property type="match status" value="1"/>
</dbReference>
<dbReference type="Pfam" id="PF19086">
    <property type="entry name" value="Terpene_syn_C_2"/>
    <property type="match status" value="1"/>
</dbReference>
<dbReference type="SFLD" id="SFLDS00005">
    <property type="entry name" value="Isoprenoid_Synthase_Type_I"/>
    <property type="match status" value="1"/>
</dbReference>
<dbReference type="SFLD" id="SFLDG01020">
    <property type="entry name" value="Terpene_Cyclase_Like_2"/>
    <property type="match status" value="1"/>
</dbReference>
<dbReference type="SUPFAM" id="SSF48576">
    <property type="entry name" value="Terpenoid synthases"/>
    <property type="match status" value="1"/>
</dbReference>
<gene>
    <name type="primary">pntA</name>
</gene>
<feature type="chain" id="PRO_0000422013" description="Pentalenene synthase">
    <location>
        <begin position="1"/>
        <end position="337"/>
    </location>
</feature>
<feature type="short sequence motif" description="DDXXD motif">
    <location>
        <begin position="80"/>
        <end position="84"/>
    </location>
</feature>
<feature type="binding site" evidence="1">
    <location>
        <position position="80"/>
    </location>
    <ligand>
        <name>Mg(2+)</name>
        <dbReference type="ChEBI" id="CHEBI:18420"/>
        <label>1</label>
    </ligand>
</feature>
<feature type="binding site" evidence="1">
    <location>
        <position position="80"/>
    </location>
    <ligand>
        <name>Mg(2+)</name>
        <dbReference type="ChEBI" id="CHEBI:18420"/>
        <label>2</label>
    </ligand>
</feature>
<feature type="binding site" evidence="1">
    <location>
        <position position="84"/>
    </location>
    <ligand>
        <name>Mg(2+)</name>
        <dbReference type="ChEBI" id="CHEBI:18420"/>
        <label>1</label>
    </ligand>
</feature>
<feature type="binding site" evidence="1">
    <location>
        <position position="84"/>
    </location>
    <ligand>
        <name>Mg(2+)</name>
        <dbReference type="ChEBI" id="CHEBI:18420"/>
        <label>2</label>
    </ligand>
</feature>
<feature type="binding site" evidence="1">
    <location>
        <position position="219"/>
    </location>
    <ligand>
        <name>Mg(2+)</name>
        <dbReference type="ChEBI" id="CHEBI:18420"/>
        <label>3</label>
    </ligand>
</feature>
<feature type="binding site" evidence="1">
    <location>
        <position position="223"/>
    </location>
    <ligand>
        <name>Mg(2+)</name>
        <dbReference type="ChEBI" id="CHEBI:18420"/>
        <label>3</label>
    </ligand>
</feature>
<feature type="binding site" evidence="1">
    <location>
        <position position="227"/>
    </location>
    <ligand>
        <name>Mg(2+)</name>
        <dbReference type="ChEBI" id="CHEBI:18420"/>
        <label>3</label>
    </ligand>
</feature>
<protein>
    <recommendedName>
        <fullName>Pentalenene synthase</fullName>
        <shortName>PS</shortName>
        <ecNumber>4.2.3.7</ecNumber>
    </recommendedName>
    <alternativeName>
        <fullName>Pentalenolactone biosynthesis protein A</fullName>
    </alternativeName>
    <alternativeName>
        <fullName>Sesquiterpene cyclase</fullName>
    </alternativeName>
    <alternativeName>
        <fullName>Sesquiterpene synthase</fullName>
    </alternativeName>
</protein>
<proteinExistence type="inferred from homology"/>
<evidence type="ECO:0000250" key="1"/>
<evidence type="ECO:0000305" key="2"/>